<proteinExistence type="inferred from homology"/>
<gene>
    <name evidence="1" type="primary">secA</name>
    <name type="ordered locus">EF_1763</name>
</gene>
<reference key="1">
    <citation type="journal article" date="2003" name="Science">
        <title>Role of mobile DNA in the evolution of vancomycin-resistant Enterococcus faecalis.</title>
        <authorList>
            <person name="Paulsen I.T."/>
            <person name="Banerjei L."/>
            <person name="Myers G.S.A."/>
            <person name="Nelson K.E."/>
            <person name="Seshadri R."/>
            <person name="Read T.D."/>
            <person name="Fouts D.E."/>
            <person name="Eisen J.A."/>
            <person name="Gill S.R."/>
            <person name="Heidelberg J.F."/>
            <person name="Tettelin H."/>
            <person name="Dodson R.J."/>
            <person name="Umayam L.A."/>
            <person name="Brinkac L.M."/>
            <person name="Beanan M.J."/>
            <person name="Daugherty S.C."/>
            <person name="DeBoy R.T."/>
            <person name="Durkin S.A."/>
            <person name="Kolonay J.F."/>
            <person name="Madupu R."/>
            <person name="Nelson W.C."/>
            <person name="Vamathevan J.J."/>
            <person name="Tran B."/>
            <person name="Upton J."/>
            <person name="Hansen T."/>
            <person name="Shetty J."/>
            <person name="Khouri H.M."/>
            <person name="Utterback T.R."/>
            <person name="Radune D."/>
            <person name="Ketchum K.A."/>
            <person name="Dougherty B.A."/>
            <person name="Fraser C.M."/>
        </authorList>
    </citation>
    <scope>NUCLEOTIDE SEQUENCE [LARGE SCALE GENOMIC DNA]</scope>
    <source>
        <strain>ATCC 700802 / V583</strain>
    </source>
</reference>
<evidence type="ECO:0000255" key="1">
    <source>
        <dbReference type="HAMAP-Rule" id="MF_01382"/>
    </source>
</evidence>
<evidence type="ECO:0000256" key="2">
    <source>
        <dbReference type="SAM" id="MobiDB-lite"/>
    </source>
</evidence>
<protein>
    <recommendedName>
        <fullName evidence="1">Protein translocase subunit SecA</fullName>
        <ecNumber evidence="1">7.4.2.8</ecNumber>
    </recommendedName>
</protein>
<keyword id="KW-0067">ATP-binding</keyword>
<keyword id="KW-1003">Cell membrane</keyword>
<keyword id="KW-0963">Cytoplasm</keyword>
<keyword id="KW-0472">Membrane</keyword>
<keyword id="KW-0479">Metal-binding</keyword>
<keyword id="KW-0547">Nucleotide-binding</keyword>
<keyword id="KW-0653">Protein transport</keyword>
<keyword id="KW-1185">Reference proteome</keyword>
<keyword id="KW-1278">Translocase</keyword>
<keyword id="KW-0811">Translocation</keyword>
<keyword id="KW-0813">Transport</keyword>
<keyword id="KW-0862">Zinc</keyword>
<accession>Q834A7</accession>
<dbReference type="EC" id="7.4.2.8" evidence="1"/>
<dbReference type="EMBL" id="AE016830">
    <property type="protein sequence ID" value="AAO81535.1"/>
    <property type="molecule type" value="Genomic_DNA"/>
</dbReference>
<dbReference type="RefSeq" id="NP_815465.1">
    <property type="nucleotide sequence ID" value="NC_004668.1"/>
</dbReference>
<dbReference type="RefSeq" id="WP_002381826.1">
    <property type="nucleotide sequence ID" value="NZ_KE136528.1"/>
</dbReference>
<dbReference type="SMR" id="Q834A7"/>
<dbReference type="STRING" id="226185.EF_1763"/>
<dbReference type="EnsemblBacteria" id="AAO81535">
    <property type="protein sequence ID" value="AAO81535"/>
    <property type="gene ID" value="EF_1763"/>
</dbReference>
<dbReference type="GeneID" id="60894056"/>
<dbReference type="KEGG" id="efa:EF1763"/>
<dbReference type="PATRIC" id="fig|226185.45.peg.1751"/>
<dbReference type="eggNOG" id="COG0653">
    <property type="taxonomic scope" value="Bacteria"/>
</dbReference>
<dbReference type="HOGENOM" id="CLU_005314_3_0_9"/>
<dbReference type="Proteomes" id="UP000001415">
    <property type="component" value="Chromosome"/>
</dbReference>
<dbReference type="GO" id="GO:0031522">
    <property type="term" value="C:cell envelope Sec protein transport complex"/>
    <property type="evidence" value="ECO:0007669"/>
    <property type="project" value="TreeGrafter"/>
</dbReference>
<dbReference type="GO" id="GO:0005829">
    <property type="term" value="C:cytosol"/>
    <property type="evidence" value="ECO:0007669"/>
    <property type="project" value="TreeGrafter"/>
</dbReference>
<dbReference type="GO" id="GO:0005886">
    <property type="term" value="C:plasma membrane"/>
    <property type="evidence" value="ECO:0007669"/>
    <property type="project" value="UniProtKB-SubCell"/>
</dbReference>
<dbReference type="GO" id="GO:0005524">
    <property type="term" value="F:ATP binding"/>
    <property type="evidence" value="ECO:0007669"/>
    <property type="project" value="UniProtKB-UniRule"/>
</dbReference>
<dbReference type="GO" id="GO:0046872">
    <property type="term" value="F:metal ion binding"/>
    <property type="evidence" value="ECO:0007669"/>
    <property type="project" value="UniProtKB-KW"/>
</dbReference>
<dbReference type="GO" id="GO:0008564">
    <property type="term" value="F:protein-exporting ATPase activity"/>
    <property type="evidence" value="ECO:0007669"/>
    <property type="project" value="UniProtKB-EC"/>
</dbReference>
<dbReference type="GO" id="GO:0065002">
    <property type="term" value="P:intracellular protein transmembrane transport"/>
    <property type="evidence" value="ECO:0007669"/>
    <property type="project" value="UniProtKB-UniRule"/>
</dbReference>
<dbReference type="GO" id="GO:0017038">
    <property type="term" value="P:protein import"/>
    <property type="evidence" value="ECO:0007669"/>
    <property type="project" value="InterPro"/>
</dbReference>
<dbReference type="GO" id="GO:0006605">
    <property type="term" value="P:protein targeting"/>
    <property type="evidence" value="ECO:0007669"/>
    <property type="project" value="UniProtKB-UniRule"/>
</dbReference>
<dbReference type="GO" id="GO:0043952">
    <property type="term" value="P:protein transport by the Sec complex"/>
    <property type="evidence" value="ECO:0007669"/>
    <property type="project" value="TreeGrafter"/>
</dbReference>
<dbReference type="CDD" id="cd17928">
    <property type="entry name" value="DEXDc_SecA"/>
    <property type="match status" value="1"/>
</dbReference>
<dbReference type="CDD" id="cd18803">
    <property type="entry name" value="SF2_C_secA"/>
    <property type="match status" value="1"/>
</dbReference>
<dbReference type="FunFam" id="1.10.3060.10:FF:000002">
    <property type="entry name" value="Preprotein translocase subunit SecA"/>
    <property type="match status" value="1"/>
</dbReference>
<dbReference type="FunFam" id="3.40.50.300:FF:000429">
    <property type="entry name" value="Preprotein translocase subunit SecA"/>
    <property type="match status" value="1"/>
</dbReference>
<dbReference type="FunFam" id="3.90.1440.10:FF:000001">
    <property type="entry name" value="Preprotein translocase subunit SecA"/>
    <property type="match status" value="1"/>
</dbReference>
<dbReference type="Gene3D" id="1.10.3060.10">
    <property type="entry name" value="Helical scaffold and wing domains of SecA"/>
    <property type="match status" value="1"/>
</dbReference>
<dbReference type="Gene3D" id="3.40.50.300">
    <property type="entry name" value="P-loop containing nucleotide triphosphate hydrolases"/>
    <property type="match status" value="2"/>
</dbReference>
<dbReference type="Gene3D" id="3.90.1440.10">
    <property type="entry name" value="SecA, preprotein cross-linking domain"/>
    <property type="match status" value="1"/>
</dbReference>
<dbReference type="HAMAP" id="MF_01382">
    <property type="entry name" value="SecA"/>
    <property type="match status" value="1"/>
</dbReference>
<dbReference type="InterPro" id="IPR014001">
    <property type="entry name" value="Helicase_ATP-bd"/>
</dbReference>
<dbReference type="InterPro" id="IPR001650">
    <property type="entry name" value="Helicase_C-like"/>
</dbReference>
<dbReference type="InterPro" id="IPR027417">
    <property type="entry name" value="P-loop_NTPase"/>
</dbReference>
<dbReference type="InterPro" id="IPR004027">
    <property type="entry name" value="SEC_C_motif"/>
</dbReference>
<dbReference type="InterPro" id="IPR000185">
    <property type="entry name" value="SecA"/>
</dbReference>
<dbReference type="InterPro" id="IPR020937">
    <property type="entry name" value="SecA_CS"/>
</dbReference>
<dbReference type="InterPro" id="IPR011115">
    <property type="entry name" value="SecA_DEAD"/>
</dbReference>
<dbReference type="InterPro" id="IPR014018">
    <property type="entry name" value="SecA_motor_DEAD"/>
</dbReference>
<dbReference type="InterPro" id="IPR011130">
    <property type="entry name" value="SecA_preprotein_X-link_dom"/>
</dbReference>
<dbReference type="InterPro" id="IPR044722">
    <property type="entry name" value="SecA_SF2_C"/>
</dbReference>
<dbReference type="InterPro" id="IPR011116">
    <property type="entry name" value="SecA_Wing/Scaffold"/>
</dbReference>
<dbReference type="InterPro" id="IPR036266">
    <property type="entry name" value="SecA_Wing/Scaffold_sf"/>
</dbReference>
<dbReference type="InterPro" id="IPR036670">
    <property type="entry name" value="SecA_X-link_sf"/>
</dbReference>
<dbReference type="NCBIfam" id="NF006630">
    <property type="entry name" value="PRK09200.1"/>
    <property type="match status" value="1"/>
</dbReference>
<dbReference type="NCBIfam" id="NF009538">
    <property type="entry name" value="PRK12904.1"/>
    <property type="match status" value="1"/>
</dbReference>
<dbReference type="NCBIfam" id="TIGR00963">
    <property type="entry name" value="secA"/>
    <property type="match status" value="1"/>
</dbReference>
<dbReference type="PANTHER" id="PTHR30612:SF0">
    <property type="entry name" value="CHLOROPLAST PROTEIN-TRANSPORTING ATPASE"/>
    <property type="match status" value="1"/>
</dbReference>
<dbReference type="PANTHER" id="PTHR30612">
    <property type="entry name" value="SECA INNER MEMBRANE COMPONENT OF SEC PROTEIN SECRETION SYSTEM"/>
    <property type="match status" value="1"/>
</dbReference>
<dbReference type="Pfam" id="PF21090">
    <property type="entry name" value="P-loop_SecA"/>
    <property type="match status" value="2"/>
</dbReference>
<dbReference type="Pfam" id="PF02810">
    <property type="entry name" value="SEC-C"/>
    <property type="match status" value="1"/>
</dbReference>
<dbReference type="Pfam" id="PF07517">
    <property type="entry name" value="SecA_DEAD"/>
    <property type="match status" value="1"/>
</dbReference>
<dbReference type="Pfam" id="PF01043">
    <property type="entry name" value="SecA_PP_bind"/>
    <property type="match status" value="1"/>
</dbReference>
<dbReference type="Pfam" id="PF07516">
    <property type="entry name" value="SecA_SW"/>
    <property type="match status" value="1"/>
</dbReference>
<dbReference type="PRINTS" id="PR00906">
    <property type="entry name" value="SECA"/>
</dbReference>
<dbReference type="SMART" id="SM00957">
    <property type="entry name" value="SecA_DEAD"/>
    <property type="match status" value="1"/>
</dbReference>
<dbReference type="SMART" id="SM00958">
    <property type="entry name" value="SecA_PP_bind"/>
    <property type="match status" value="1"/>
</dbReference>
<dbReference type="SUPFAM" id="SSF81886">
    <property type="entry name" value="Helical scaffold and wing domains of SecA"/>
    <property type="match status" value="1"/>
</dbReference>
<dbReference type="SUPFAM" id="SSF52540">
    <property type="entry name" value="P-loop containing nucleoside triphosphate hydrolases"/>
    <property type="match status" value="2"/>
</dbReference>
<dbReference type="SUPFAM" id="SSF81767">
    <property type="entry name" value="Pre-protein crosslinking domain of SecA"/>
    <property type="match status" value="1"/>
</dbReference>
<dbReference type="PROSITE" id="PS01312">
    <property type="entry name" value="SECA"/>
    <property type="match status" value="1"/>
</dbReference>
<dbReference type="PROSITE" id="PS51196">
    <property type="entry name" value="SECA_MOTOR_DEAD"/>
    <property type="match status" value="1"/>
</dbReference>
<organism>
    <name type="scientific">Enterococcus faecalis (strain ATCC 700802 / V583)</name>
    <dbReference type="NCBI Taxonomy" id="226185"/>
    <lineage>
        <taxon>Bacteria</taxon>
        <taxon>Bacillati</taxon>
        <taxon>Bacillota</taxon>
        <taxon>Bacilli</taxon>
        <taxon>Lactobacillales</taxon>
        <taxon>Enterococcaceae</taxon>
        <taxon>Enterococcus</taxon>
    </lineage>
</organism>
<comment type="function">
    <text evidence="1">Part of the Sec protein translocase complex. Interacts with the SecYEG preprotein conducting channel. Has a central role in coupling the hydrolysis of ATP to the transfer of proteins into and across the cell membrane, serving as an ATP-driven molecular motor driving the stepwise translocation of polypeptide chains across the membrane.</text>
</comment>
<comment type="catalytic activity">
    <reaction evidence="1">
        <text>ATP + H2O + cellular proteinSide 1 = ADP + phosphate + cellular proteinSide 2.</text>
        <dbReference type="EC" id="7.4.2.8"/>
    </reaction>
</comment>
<comment type="cofactor">
    <cofactor evidence="1">
        <name>Zn(2+)</name>
        <dbReference type="ChEBI" id="CHEBI:29105"/>
    </cofactor>
    <text evidence="1">May bind 1 zinc ion per subunit.</text>
</comment>
<comment type="subunit">
    <text evidence="1">Monomer and homodimer. Part of the essential Sec protein translocation apparatus which comprises SecA, SecYEG and auxiliary proteins SecDF. Other proteins may also be involved.</text>
</comment>
<comment type="subcellular location">
    <subcellularLocation>
        <location evidence="1">Cell membrane</location>
        <topology evidence="1">Peripheral membrane protein</topology>
        <orientation evidence="1">Cytoplasmic side</orientation>
    </subcellularLocation>
    <subcellularLocation>
        <location evidence="1">Cytoplasm</location>
    </subcellularLocation>
    <text evidence="1">Distribution is 50-50.</text>
</comment>
<comment type="similarity">
    <text evidence="1">Belongs to the SecA family.</text>
</comment>
<feature type="chain" id="PRO_0000320801" description="Protein translocase subunit SecA">
    <location>
        <begin position="1"/>
        <end position="845"/>
    </location>
</feature>
<feature type="region of interest" description="Disordered" evidence="2">
    <location>
        <begin position="787"/>
        <end position="845"/>
    </location>
</feature>
<feature type="compositionally biased region" description="Basic residues" evidence="2">
    <location>
        <begin position="835"/>
        <end position="845"/>
    </location>
</feature>
<feature type="binding site" evidence="1">
    <location>
        <position position="85"/>
    </location>
    <ligand>
        <name>ATP</name>
        <dbReference type="ChEBI" id="CHEBI:30616"/>
    </ligand>
</feature>
<feature type="binding site" evidence="1">
    <location>
        <begin position="103"/>
        <end position="107"/>
    </location>
    <ligand>
        <name>ATP</name>
        <dbReference type="ChEBI" id="CHEBI:30616"/>
    </ligand>
</feature>
<feature type="binding site" evidence="1">
    <location>
        <position position="492"/>
    </location>
    <ligand>
        <name>ATP</name>
        <dbReference type="ChEBI" id="CHEBI:30616"/>
    </ligand>
</feature>
<feature type="binding site" evidence="1">
    <location>
        <position position="829"/>
    </location>
    <ligand>
        <name>Zn(2+)</name>
        <dbReference type="ChEBI" id="CHEBI:29105"/>
    </ligand>
</feature>
<feature type="binding site" evidence="1">
    <location>
        <position position="831"/>
    </location>
    <ligand>
        <name>Zn(2+)</name>
        <dbReference type="ChEBI" id="CHEBI:29105"/>
    </ligand>
</feature>
<feature type="binding site" evidence="1">
    <location>
        <position position="840"/>
    </location>
    <ligand>
        <name>Zn(2+)</name>
        <dbReference type="ChEBI" id="CHEBI:29105"/>
    </ligand>
</feature>
<feature type="binding site" evidence="1">
    <location>
        <position position="841"/>
    </location>
    <ligand>
        <name>Zn(2+)</name>
        <dbReference type="ChEBI" id="CHEBI:29105"/>
    </ligand>
</feature>
<name>SECA_ENTFA</name>
<sequence length="845" mass="96213">MANFLKKMIENDKKELRRLEKIADKIDAHASAMEQLSDEQLREKTDEFKARYQKGETLDELLPEAFAVVREAAKRVLGLFPYRVQLMGGIVLHDGNIPEMRTGEGKTLTATMPVYLNALSGEGVHVVTVNEYLATRDSNEMGELYNFLGLSVGLNINSKSSDEKREAYNCDITYSTNNELGFDYLRDNMVVYRSQMVQRPLNYAIVDEVDSILIDEARTPLIISGQAEKSTALYTRADNFVKRLKEDEDYKIDIQSKTIGLTEAGIEKAEQTFGLDNLYDIENTALTHHLDQALRANYIMLLDIDYVVQDNKVLIVDQFTGRIMDGRRYSDGLHQAIEAKEGVEIEDETKTMATITFQNYFRMYKKLAGMTGTAKTEEEEFREIYNIQVIQIPTNRPIIRDDRPDLLYPTLESKFNAVVEDIKERYHKGQPVLVGTVAVETSELLSDKLNAAKIPHEVLNAKNHFKEAEIIMNAGQKGAVTIATNMAGRGTDIKLGLGVLELGGLAVIGTERHESRRIDNQLRGRAGRQGDPGVSQFYLSLEDDLMKRFGSERIKTFLERMNVQEEDAVIQSKMFTRQVESAQKRVEGNNYDTRKNVLQYDDVMREQREVIYAQRQEVIMEENDLSDVLMGMVKRTIGRVVDSHTQLEKEEWNLDGIVDFAASTLVHEDTISKKDLENKSAEEIKDYLVARAQEVFEEKSQQLNGQEQLLEFEKVVILRVVDTKWTDHIDAMDQLRQSVGLRAYGQNNPLVEYQTEGYSMYNNMVGSIEYEVTRLFMKSEIRQNVQREQVAQGQAEHPETEQDAAAQSNTSAKRQPVRVDKKVGRNDLCPCGSGKKFKNCHGRNA</sequence>